<proteinExistence type="evidence at transcript level"/>
<organism>
    <name type="scientific">Pongo abelii</name>
    <name type="common">Sumatran orangutan</name>
    <name type="synonym">Pongo pygmaeus abelii</name>
    <dbReference type="NCBI Taxonomy" id="9601"/>
    <lineage>
        <taxon>Eukaryota</taxon>
        <taxon>Metazoa</taxon>
        <taxon>Chordata</taxon>
        <taxon>Craniata</taxon>
        <taxon>Vertebrata</taxon>
        <taxon>Euteleostomi</taxon>
        <taxon>Mammalia</taxon>
        <taxon>Eutheria</taxon>
        <taxon>Euarchontoglires</taxon>
        <taxon>Primates</taxon>
        <taxon>Haplorrhini</taxon>
        <taxon>Catarrhini</taxon>
        <taxon>Hominidae</taxon>
        <taxon>Pongo</taxon>
    </lineage>
</organism>
<gene>
    <name type="primary">FLAD1</name>
</gene>
<comment type="function">
    <text evidence="1">Catalyzes the adenylation of flavin mononucleotide (FMN) to form flavin adenine dinucleotide (FAD) coenzyme.</text>
</comment>
<comment type="catalytic activity">
    <reaction>
        <text>FMN + ATP + H(+) = FAD + diphosphate</text>
        <dbReference type="Rhea" id="RHEA:17237"/>
        <dbReference type="ChEBI" id="CHEBI:15378"/>
        <dbReference type="ChEBI" id="CHEBI:30616"/>
        <dbReference type="ChEBI" id="CHEBI:33019"/>
        <dbReference type="ChEBI" id="CHEBI:57692"/>
        <dbReference type="ChEBI" id="CHEBI:58210"/>
        <dbReference type="EC" id="2.7.7.2"/>
    </reaction>
</comment>
<comment type="cofactor">
    <cofactor evidence="1">
        <name>Mg(2+)</name>
        <dbReference type="ChEBI" id="CHEBI:18420"/>
    </cofactor>
</comment>
<comment type="pathway">
    <text>Cofactor biosynthesis; FAD biosynthesis; FAD from FMN: step 1/1.</text>
</comment>
<comment type="subcellular location">
    <subcellularLocation>
        <location evidence="1">Cytoplasm</location>
    </subcellularLocation>
</comment>
<comment type="domain">
    <text>The molybdenum cofactor biosynthesis protein-like region may not be functional.</text>
</comment>
<comment type="similarity">
    <text evidence="5">In the N-terminal section; belongs to the MoaB/Mog family.</text>
</comment>
<comment type="similarity">
    <text evidence="5">In the C-terminal section; belongs to the PAPS reductase family. FAD1 subfamily.</text>
</comment>
<dbReference type="EC" id="2.7.7.2"/>
<dbReference type="EMBL" id="CR858296">
    <property type="protein sequence ID" value="CAH90533.1"/>
    <property type="molecule type" value="mRNA"/>
</dbReference>
<dbReference type="SMR" id="Q5RCH4"/>
<dbReference type="STRING" id="9601.ENSPPYP00000000889"/>
<dbReference type="eggNOG" id="KOG2644">
    <property type="taxonomic scope" value="Eukaryota"/>
</dbReference>
<dbReference type="InParanoid" id="Q5RCH4"/>
<dbReference type="UniPathway" id="UPA00277">
    <property type="reaction ID" value="UER00407"/>
</dbReference>
<dbReference type="Proteomes" id="UP000001595">
    <property type="component" value="Unplaced"/>
</dbReference>
<dbReference type="GO" id="GO:0005737">
    <property type="term" value="C:cytoplasm"/>
    <property type="evidence" value="ECO:0007669"/>
    <property type="project" value="UniProtKB-SubCell"/>
</dbReference>
<dbReference type="GO" id="GO:0005524">
    <property type="term" value="F:ATP binding"/>
    <property type="evidence" value="ECO:0007669"/>
    <property type="project" value="UniProtKB-KW"/>
</dbReference>
<dbReference type="GO" id="GO:0003919">
    <property type="term" value="F:FMN adenylyltransferase activity"/>
    <property type="evidence" value="ECO:0007669"/>
    <property type="project" value="UniProtKB-EC"/>
</dbReference>
<dbReference type="GO" id="GO:0006747">
    <property type="term" value="P:FAD biosynthetic process"/>
    <property type="evidence" value="ECO:0007669"/>
    <property type="project" value="UniProtKB-UniPathway"/>
</dbReference>
<dbReference type="CDD" id="cd00885">
    <property type="entry name" value="cinA"/>
    <property type="match status" value="1"/>
</dbReference>
<dbReference type="CDD" id="cd23948">
    <property type="entry name" value="FAD_synthase"/>
    <property type="match status" value="1"/>
</dbReference>
<dbReference type="FunFam" id="3.40.50.620:FF:000113">
    <property type="entry name" value="FAD synthase"/>
    <property type="match status" value="1"/>
</dbReference>
<dbReference type="FunFam" id="3.40.980.10:FF:000007">
    <property type="entry name" value="FAD synthase"/>
    <property type="match status" value="1"/>
</dbReference>
<dbReference type="Gene3D" id="3.40.50.620">
    <property type="entry name" value="HUPs"/>
    <property type="match status" value="1"/>
</dbReference>
<dbReference type="Gene3D" id="3.40.980.10">
    <property type="entry name" value="MoaB/Mog-like domain"/>
    <property type="match status" value="1"/>
</dbReference>
<dbReference type="InterPro" id="IPR012183">
    <property type="entry name" value="FAD_synth_MoaB/Mog-bd"/>
</dbReference>
<dbReference type="InterPro" id="IPR056596">
    <property type="entry name" value="FLAD1_M"/>
</dbReference>
<dbReference type="InterPro" id="IPR036425">
    <property type="entry name" value="MoaB/Mog-like_dom_sf"/>
</dbReference>
<dbReference type="InterPro" id="IPR001453">
    <property type="entry name" value="MoaB/Mog_dom"/>
</dbReference>
<dbReference type="InterPro" id="IPR002500">
    <property type="entry name" value="PAPS_reduct_dom"/>
</dbReference>
<dbReference type="InterPro" id="IPR014729">
    <property type="entry name" value="Rossmann-like_a/b/a_fold"/>
</dbReference>
<dbReference type="PANTHER" id="PTHR23293:SF9">
    <property type="entry name" value="FAD SYNTHASE"/>
    <property type="match status" value="1"/>
</dbReference>
<dbReference type="PANTHER" id="PTHR23293">
    <property type="entry name" value="FAD SYNTHETASE-RELATED FMN ADENYLYLTRANSFERASE"/>
    <property type="match status" value="1"/>
</dbReference>
<dbReference type="Pfam" id="PF24102">
    <property type="entry name" value="FLAD1_M"/>
    <property type="match status" value="1"/>
</dbReference>
<dbReference type="Pfam" id="PF00994">
    <property type="entry name" value="MoCF_biosynth"/>
    <property type="match status" value="1"/>
</dbReference>
<dbReference type="Pfam" id="PF01507">
    <property type="entry name" value="PAPS_reduct"/>
    <property type="match status" value="1"/>
</dbReference>
<dbReference type="PIRSF" id="PIRSF036620">
    <property type="entry name" value="MPTbdFAD"/>
    <property type="match status" value="1"/>
</dbReference>
<dbReference type="SMART" id="SM00852">
    <property type="entry name" value="MoCF_biosynth"/>
    <property type="match status" value="1"/>
</dbReference>
<dbReference type="SUPFAM" id="SSF52402">
    <property type="entry name" value="Adenine nucleotide alpha hydrolases-like"/>
    <property type="match status" value="1"/>
</dbReference>
<dbReference type="SUPFAM" id="SSF53218">
    <property type="entry name" value="Molybdenum cofactor biosynthesis proteins"/>
    <property type="match status" value="1"/>
</dbReference>
<feature type="chain" id="PRO_0000302739" description="FAD synthase">
    <location>
        <begin position="1"/>
        <end position="491"/>
    </location>
</feature>
<feature type="region of interest" description="Molybdenum cofactor biosynthesis protein-like">
    <location>
        <begin position="17"/>
        <end position="108"/>
    </location>
</feature>
<feature type="region of interest" description="FAD synthase">
    <location>
        <begin position="302"/>
        <end position="459"/>
    </location>
</feature>
<feature type="region of interest" description="Disordered" evidence="4">
    <location>
        <begin position="461"/>
        <end position="491"/>
    </location>
</feature>
<feature type="compositionally biased region" description="Acidic residues" evidence="4">
    <location>
        <begin position="481"/>
        <end position="491"/>
    </location>
</feature>
<feature type="modified residue" description="Phosphoserine" evidence="2">
    <location>
        <position position="9"/>
    </location>
</feature>
<feature type="modified residue" description="N6-acetyllysine; alternate" evidence="3">
    <location>
        <position position="282"/>
    </location>
</feature>
<feature type="modified residue" description="N6-succinyllysine; alternate" evidence="3">
    <location>
        <position position="282"/>
    </location>
</feature>
<feature type="modified residue" description="Phosphoserine" evidence="2">
    <location>
        <position position="467"/>
    </location>
</feature>
<keyword id="KW-0007">Acetylation</keyword>
<keyword id="KW-0067">ATP-binding</keyword>
<keyword id="KW-0963">Cytoplasm</keyword>
<keyword id="KW-0274">FAD</keyword>
<keyword id="KW-0285">Flavoprotein</keyword>
<keyword id="KW-0288">FMN</keyword>
<keyword id="KW-0547">Nucleotide-binding</keyword>
<keyword id="KW-0548">Nucleotidyltransferase</keyword>
<keyword id="KW-0597">Phosphoprotein</keyword>
<keyword id="KW-1185">Reference proteome</keyword>
<keyword id="KW-0808">Transferase</keyword>
<reference key="1">
    <citation type="submission" date="2004-11" db="EMBL/GenBank/DDBJ databases">
        <authorList>
            <consortium name="The German cDNA consortium"/>
        </authorList>
    </citation>
    <scope>NUCLEOTIDE SEQUENCE [LARGE SCALE MRNA]</scope>
    <source>
        <tissue>Kidney</tissue>
    </source>
</reference>
<name>FAD1_PONAB</name>
<sequence length="491" mass="54307">MTSRASELSPGRSVTAGIIIVGDEILKGHTQDTNTFFLCRTLRSLGVQVCRVSVAPDEVATIAAEVTSFSNRFTHVLTAGGIGPTHDDVTFEAVAQAFGDELKPHPELEAATKALGGEGWEKLSLVPSSACLHYGTDPRTGHPFRFPLVSVRNVYLFPSIPELLRRVLEGMKGLFQNPAVQFHSKELYVAADEASIAPILAEAQAHFGRRLGLGSYPDWGSNYYQVKLTLDSRGRRIPGGNAWPNLTARLPQGSLVPYMPNAVEQASEAVYKLAESGSSLGKKVAGALQTIETALAQYSLTQLCVGFNGGKDCTALLHLFHAAVQRKLPDVPNPLQILYIRSISPFPELEQFLQDTIKRYNLQMLEAEGSMKQALGELQARHPQLEAVLMGTRRTDPYSCSLCPFSPTDPGWPAFMRINPLLDWTYRDIWDFLRQLFVPYCILYDRGYTSLGSRENTVRDPALKRLSPGGHPTYRPAYLLENEEEERNSRT</sequence>
<protein>
    <recommendedName>
        <fullName>FAD synthase</fullName>
        <ecNumber>2.7.7.2</ecNumber>
    </recommendedName>
    <alternativeName>
        <fullName>FAD pyrophosphorylase</fullName>
    </alternativeName>
    <alternativeName>
        <fullName>FMN adenylyltransferase</fullName>
    </alternativeName>
    <alternativeName>
        <fullName>Flavin adenine dinucleotide synthase</fullName>
    </alternativeName>
    <domain>
        <recommendedName>
            <fullName>Molybdenum cofactor biosynthesis protein-like region</fullName>
        </recommendedName>
    </domain>
    <domain>
        <recommendedName>
            <fullName>FAD synthase region</fullName>
        </recommendedName>
    </domain>
</protein>
<evidence type="ECO:0000250" key="1"/>
<evidence type="ECO:0000250" key="2">
    <source>
        <dbReference type="UniProtKB" id="Q8NFF5"/>
    </source>
</evidence>
<evidence type="ECO:0000250" key="3">
    <source>
        <dbReference type="UniProtKB" id="Q8R123"/>
    </source>
</evidence>
<evidence type="ECO:0000256" key="4">
    <source>
        <dbReference type="SAM" id="MobiDB-lite"/>
    </source>
</evidence>
<evidence type="ECO:0000305" key="5"/>
<accession>Q5RCH4</accession>